<protein>
    <recommendedName>
        <fullName>Uncharacterized metallophosphoesterase YkuE</fullName>
    </recommendedName>
</protein>
<sequence length="286" mass="31615">MKKMSRRQFLKGMFGALAAGALTAGGGYGYARYLEPHMIETTEHTIKSSLIPHGFDGFKIVQFSDAHLSDYFTLEDLKTVILTINESKPDLIVFTGDIIDNPDTYQHHQAVIPLLRKLNAPFGKLCIYGNHDHGGYGTAVYKSLMTAGGFTVYRNGYQTLSLADGSKIEIASLDDLMLGNPDYEGTLSRLSDRLFSILLVHEPDAALKTTDYPVNLQLSGHTHGGQIQLPFYGPIITPPYGKVYTEGMYQTGSTHIYVNRGLGMTRLPLRFLAKPEITVFTLKSTN</sequence>
<feature type="signal peptide" description="Tat-type signal" evidence="2">
    <location>
        <begin position="1"/>
        <end position="31"/>
    </location>
</feature>
<feature type="chain" id="PRO_0000172852" description="Uncharacterized metallophosphoesterase YkuE">
    <location>
        <begin position="32"/>
        <end position="286"/>
    </location>
</feature>
<feature type="binding site" evidence="1">
    <location>
        <position position="65"/>
    </location>
    <ligand>
        <name>a divalent metal cation</name>
        <dbReference type="ChEBI" id="CHEBI:60240"/>
        <label>1</label>
    </ligand>
</feature>
<feature type="binding site" evidence="1">
    <location>
        <position position="67"/>
    </location>
    <ligand>
        <name>a divalent metal cation</name>
        <dbReference type="ChEBI" id="CHEBI:60240"/>
        <label>1</label>
    </ligand>
</feature>
<feature type="binding site" evidence="1">
    <location>
        <position position="97"/>
    </location>
    <ligand>
        <name>a divalent metal cation</name>
        <dbReference type="ChEBI" id="CHEBI:60240"/>
        <label>1</label>
    </ligand>
</feature>
<feature type="binding site" evidence="1">
    <location>
        <position position="97"/>
    </location>
    <ligand>
        <name>a divalent metal cation</name>
        <dbReference type="ChEBI" id="CHEBI:60240"/>
        <label>2</label>
    </ligand>
</feature>
<feature type="binding site" evidence="1">
    <location>
        <position position="130"/>
    </location>
    <ligand>
        <name>a divalent metal cation</name>
        <dbReference type="ChEBI" id="CHEBI:60240"/>
        <label>2</label>
    </ligand>
</feature>
<feature type="binding site" evidence="1">
    <location>
        <position position="221"/>
    </location>
    <ligand>
        <name>a divalent metal cation</name>
        <dbReference type="ChEBI" id="CHEBI:60240"/>
        <label>2</label>
    </ligand>
</feature>
<feature type="binding site" evidence="1">
    <location>
        <position position="223"/>
    </location>
    <ligand>
        <name>a divalent metal cation</name>
        <dbReference type="ChEBI" id="CHEBI:60240"/>
        <label>1</label>
    </ligand>
</feature>
<feature type="sequence conflict" description="In Ref. 1; CAA10868." evidence="3" ref="1">
    <original>LMLGNPDYE</original>
    <variation>FNAGKPRFMQ</variation>
    <location>
        <begin position="176"/>
        <end position="184"/>
    </location>
</feature>
<accession>O34870</accession>
<comment type="cofactor">
    <cofactor evidence="1">
        <name>a divalent metal cation</name>
        <dbReference type="ChEBI" id="CHEBI:60240"/>
    </cofactor>
    <text evidence="1">Binds 2 divalent metal cations.</text>
</comment>
<comment type="PTM">
    <text>Predicted to be exported by the Tat system. The position of the signal peptide cleavage has not been experimentally proven.</text>
</comment>
<comment type="similarity">
    <text evidence="3">Belongs to the metallophosphoesterase superfamily.</text>
</comment>
<name>YKUE_BACSU</name>
<proteinExistence type="inferred from homology"/>
<reference key="1">
    <citation type="submission" date="1997-11" db="EMBL/GenBank/DDBJ databases">
        <title>Sequence of the Bacillus subtilis chromosome from ykuA to cse-15.</title>
        <authorList>
            <person name="Scanlan E."/>
            <person name="Devine K.M."/>
        </authorList>
    </citation>
    <scope>NUCLEOTIDE SEQUENCE [GENOMIC DNA]</scope>
    <source>
        <strain>168</strain>
    </source>
</reference>
<reference key="2">
    <citation type="journal article" date="1997" name="Nature">
        <title>The complete genome sequence of the Gram-positive bacterium Bacillus subtilis.</title>
        <authorList>
            <person name="Kunst F."/>
            <person name="Ogasawara N."/>
            <person name="Moszer I."/>
            <person name="Albertini A.M."/>
            <person name="Alloni G."/>
            <person name="Azevedo V."/>
            <person name="Bertero M.G."/>
            <person name="Bessieres P."/>
            <person name="Bolotin A."/>
            <person name="Borchert S."/>
            <person name="Borriss R."/>
            <person name="Boursier L."/>
            <person name="Brans A."/>
            <person name="Braun M."/>
            <person name="Brignell S.C."/>
            <person name="Bron S."/>
            <person name="Brouillet S."/>
            <person name="Bruschi C.V."/>
            <person name="Caldwell B."/>
            <person name="Capuano V."/>
            <person name="Carter N.M."/>
            <person name="Choi S.-K."/>
            <person name="Codani J.-J."/>
            <person name="Connerton I.F."/>
            <person name="Cummings N.J."/>
            <person name="Daniel R.A."/>
            <person name="Denizot F."/>
            <person name="Devine K.M."/>
            <person name="Duesterhoeft A."/>
            <person name="Ehrlich S.D."/>
            <person name="Emmerson P.T."/>
            <person name="Entian K.-D."/>
            <person name="Errington J."/>
            <person name="Fabret C."/>
            <person name="Ferrari E."/>
            <person name="Foulger D."/>
            <person name="Fritz C."/>
            <person name="Fujita M."/>
            <person name="Fujita Y."/>
            <person name="Fuma S."/>
            <person name="Galizzi A."/>
            <person name="Galleron N."/>
            <person name="Ghim S.-Y."/>
            <person name="Glaser P."/>
            <person name="Goffeau A."/>
            <person name="Golightly E.J."/>
            <person name="Grandi G."/>
            <person name="Guiseppi G."/>
            <person name="Guy B.J."/>
            <person name="Haga K."/>
            <person name="Haiech J."/>
            <person name="Harwood C.R."/>
            <person name="Henaut A."/>
            <person name="Hilbert H."/>
            <person name="Holsappel S."/>
            <person name="Hosono S."/>
            <person name="Hullo M.-F."/>
            <person name="Itaya M."/>
            <person name="Jones L.-M."/>
            <person name="Joris B."/>
            <person name="Karamata D."/>
            <person name="Kasahara Y."/>
            <person name="Klaerr-Blanchard M."/>
            <person name="Klein C."/>
            <person name="Kobayashi Y."/>
            <person name="Koetter P."/>
            <person name="Koningstein G."/>
            <person name="Krogh S."/>
            <person name="Kumano M."/>
            <person name="Kurita K."/>
            <person name="Lapidus A."/>
            <person name="Lardinois S."/>
            <person name="Lauber J."/>
            <person name="Lazarevic V."/>
            <person name="Lee S.-M."/>
            <person name="Levine A."/>
            <person name="Liu H."/>
            <person name="Masuda S."/>
            <person name="Mauel C."/>
            <person name="Medigue C."/>
            <person name="Medina N."/>
            <person name="Mellado R.P."/>
            <person name="Mizuno M."/>
            <person name="Moestl D."/>
            <person name="Nakai S."/>
            <person name="Noback M."/>
            <person name="Noone D."/>
            <person name="O'Reilly M."/>
            <person name="Ogawa K."/>
            <person name="Ogiwara A."/>
            <person name="Oudega B."/>
            <person name="Park S.-H."/>
            <person name="Parro V."/>
            <person name="Pohl T.M."/>
            <person name="Portetelle D."/>
            <person name="Porwollik S."/>
            <person name="Prescott A.M."/>
            <person name="Presecan E."/>
            <person name="Pujic P."/>
            <person name="Purnelle B."/>
            <person name="Rapoport G."/>
            <person name="Rey M."/>
            <person name="Reynolds S."/>
            <person name="Rieger M."/>
            <person name="Rivolta C."/>
            <person name="Rocha E."/>
            <person name="Roche B."/>
            <person name="Rose M."/>
            <person name="Sadaie Y."/>
            <person name="Sato T."/>
            <person name="Scanlan E."/>
            <person name="Schleich S."/>
            <person name="Schroeter R."/>
            <person name="Scoffone F."/>
            <person name="Sekiguchi J."/>
            <person name="Sekowska A."/>
            <person name="Seror S.J."/>
            <person name="Serror P."/>
            <person name="Shin B.-S."/>
            <person name="Soldo B."/>
            <person name="Sorokin A."/>
            <person name="Tacconi E."/>
            <person name="Takagi T."/>
            <person name="Takahashi H."/>
            <person name="Takemaru K."/>
            <person name="Takeuchi M."/>
            <person name="Tamakoshi A."/>
            <person name="Tanaka T."/>
            <person name="Terpstra P."/>
            <person name="Tognoni A."/>
            <person name="Tosato V."/>
            <person name="Uchiyama S."/>
            <person name="Vandenbol M."/>
            <person name="Vannier F."/>
            <person name="Vassarotti A."/>
            <person name="Viari A."/>
            <person name="Wambutt R."/>
            <person name="Wedler E."/>
            <person name="Wedler H."/>
            <person name="Weitzenegger T."/>
            <person name="Winters P."/>
            <person name="Wipat A."/>
            <person name="Yamamoto H."/>
            <person name="Yamane K."/>
            <person name="Yasumoto K."/>
            <person name="Yata K."/>
            <person name="Yoshida K."/>
            <person name="Yoshikawa H.-F."/>
            <person name="Zumstein E."/>
            <person name="Yoshikawa H."/>
            <person name="Danchin A."/>
        </authorList>
    </citation>
    <scope>NUCLEOTIDE SEQUENCE [LARGE SCALE GENOMIC DNA]</scope>
    <source>
        <strain>168</strain>
    </source>
</reference>
<reference key="3">
    <citation type="journal article" date="2009" name="Microbiology">
        <title>From a consortium sequence to a unified sequence: the Bacillus subtilis 168 reference genome a decade later.</title>
        <authorList>
            <person name="Barbe V."/>
            <person name="Cruveiller S."/>
            <person name="Kunst F."/>
            <person name="Lenoble P."/>
            <person name="Meurice G."/>
            <person name="Sekowska A."/>
            <person name="Vallenet D."/>
            <person name="Wang T."/>
            <person name="Moszer I."/>
            <person name="Medigue C."/>
            <person name="Danchin A."/>
        </authorList>
    </citation>
    <scope>SEQUENCE REVISION TO 176-184</scope>
</reference>
<dbReference type="EMBL" id="AJ222587">
    <property type="protein sequence ID" value="CAA10868.1"/>
    <property type="molecule type" value="Genomic_DNA"/>
</dbReference>
<dbReference type="EMBL" id="AL009126">
    <property type="protein sequence ID" value="CAB13278.2"/>
    <property type="molecule type" value="Genomic_DNA"/>
</dbReference>
<dbReference type="PIR" id="B69865">
    <property type="entry name" value="B69865"/>
</dbReference>
<dbReference type="RefSeq" id="WP_003232400.1">
    <property type="nucleotide sequence ID" value="NZ_OZ025638.1"/>
</dbReference>
<dbReference type="FunCoup" id="O34870">
    <property type="interactions" value="233"/>
</dbReference>
<dbReference type="STRING" id="224308.BSU14050"/>
<dbReference type="PaxDb" id="224308-BSU14050"/>
<dbReference type="EnsemblBacteria" id="CAB13278">
    <property type="protein sequence ID" value="CAB13278"/>
    <property type="gene ID" value="BSU_14050"/>
</dbReference>
<dbReference type="GeneID" id="939214"/>
<dbReference type="KEGG" id="bsu:BSU14050"/>
<dbReference type="PATRIC" id="fig|224308.179.peg.1532"/>
<dbReference type="eggNOG" id="COG1408">
    <property type="taxonomic scope" value="Bacteria"/>
</dbReference>
<dbReference type="InParanoid" id="O34870"/>
<dbReference type="OrthoDB" id="9780884at2"/>
<dbReference type="PhylomeDB" id="O34870"/>
<dbReference type="BioCyc" id="BSUB:BSU14050-MONOMER"/>
<dbReference type="Proteomes" id="UP000001570">
    <property type="component" value="Chromosome"/>
</dbReference>
<dbReference type="GO" id="GO:0016020">
    <property type="term" value="C:membrane"/>
    <property type="evidence" value="ECO:0007669"/>
    <property type="project" value="GOC"/>
</dbReference>
<dbReference type="GO" id="GO:0046872">
    <property type="term" value="F:metal ion binding"/>
    <property type="evidence" value="ECO:0007669"/>
    <property type="project" value="UniProtKB-KW"/>
</dbReference>
<dbReference type="GO" id="GO:0008758">
    <property type="term" value="F:UDP-2,3-diacylglucosamine hydrolase activity"/>
    <property type="evidence" value="ECO:0000318"/>
    <property type="project" value="GO_Central"/>
</dbReference>
<dbReference type="GO" id="GO:0009245">
    <property type="term" value="P:lipid A biosynthetic process"/>
    <property type="evidence" value="ECO:0000318"/>
    <property type="project" value="GO_Central"/>
</dbReference>
<dbReference type="CDD" id="cd07385">
    <property type="entry name" value="MPP_YkuE_C"/>
    <property type="match status" value="1"/>
</dbReference>
<dbReference type="FunFam" id="3.60.21.10:FF:000028">
    <property type="entry name" value="Putative metallophosphoesterase"/>
    <property type="match status" value="1"/>
</dbReference>
<dbReference type="Gene3D" id="3.60.21.10">
    <property type="match status" value="1"/>
</dbReference>
<dbReference type="InterPro" id="IPR004843">
    <property type="entry name" value="Calcineurin-like_PHP_ApaH"/>
</dbReference>
<dbReference type="InterPro" id="IPR029052">
    <property type="entry name" value="Metallo-depent_PP-like"/>
</dbReference>
<dbReference type="InterPro" id="IPR051158">
    <property type="entry name" value="Metallophosphoesterase_sf"/>
</dbReference>
<dbReference type="InterPro" id="IPR006311">
    <property type="entry name" value="TAT_signal"/>
</dbReference>
<dbReference type="PANTHER" id="PTHR31302:SF25">
    <property type="entry name" value="PHOSPHOESTERASE"/>
    <property type="match status" value="1"/>
</dbReference>
<dbReference type="PANTHER" id="PTHR31302">
    <property type="entry name" value="TRANSMEMBRANE PROTEIN WITH METALLOPHOSPHOESTERASE DOMAIN-RELATED"/>
    <property type="match status" value="1"/>
</dbReference>
<dbReference type="Pfam" id="PF00149">
    <property type="entry name" value="Metallophos"/>
    <property type="match status" value="1"/>
</dbReference>
<dbReference type="SUPFAM" id="SSF56300">
    <property type="entry name" value="Metallo-dependent phosphatases"/>
    <property type="match status" value="1"/>
</dbReference>
<dbReference type="PROSITE" id="PS51318">
    <property type="entry name" value="TAT"/>
    <property type="match status" value="1"/>
</dbReference>
<gene>
    <name type="primary">ykuE</name>
    <name type="ordered locus">BSU14050</name>
</gene>
<keyword id="KW-0378">Hydrolase</keyword>
<keyword id="KW-0479">Metal-binding</keyword>
<keyword id="KW-1185">Reference proteome</keyword>
<keyword id="KW-0732">Signal</keyword>
<organism>
    <name type="scientific">Bacillus subtilis (strain 168)</name>
    <dbReference type="NCBI Taxonomy" id="224308"/>
    <lineage>
        <taxon>Bacteria</taxon>
        <taxon>Bacillati</taxon>
        <taxon>Bacillota</taxon>
        <taxon>Bacilli</taxon>
        <taxon>Bacillales</taxon>
        <taxon>Bacillaceae</taxon>
        <taxon>Bacillus</taxon>
    </lineage>
</organism>
<evidence type="ECO:0000250" key="1"/>
<evidence type="ECO:0000255" key="2">
    <source>
        <dbReference type="PROSITE-ProRule" id="PRU00648"/>
    </source>
</evidence>
<evidence type="ECO:0000305" key="3"/>